<keyword id="KW-0028">Amino-acid biosynthesis</keyword>
<keyword id="KW-0368">Histidine biosynthesis</keyword>
<keyword id="KW-0378">Hydrolase</keyword>
<keyword id="KW-0486">Methionine biosynthesis</keyword>
<keyword id="KW-0511">Multifunctional enzyme</keyword>
<keyword id="KW-0521">NADP</keyword>
<keyword id="KW-0554">One-carbon metabolism</keyword>
<keyword id="KW-0560">Oxidoreductase</keyword>
<keyword id="KW-0658">Purine biosynthesis</keyword>
<keyword id="KW-1185">Reference proteome</keyword>
<accession>A8MKZ5</accession>
<evidence type="ECO:0000255" key="1">
    <source>
        <dbReference type="HAMAP-Rule" id="MF_01576"/>
    </source>
</evidence>
<comment type="function">
    <text evidence="1">Catalyzes the oxidation of 5,10-methylenetetrahydrofolate to 5,10-methenyltetrahydrofolate and then the hydrolysis of 5,10-methenyltetrahydrofolate to 10-formyltetrahydrofolate.</text>
</comment>
<comment type="catalytic activity">
    <reaction evidence="1">
        <text>(6R)-5,10-methylene-5,6,7,8-tetrahydrofolate + NADP(+) = (6R)-5,10-methenyltetrahydrofolate + NADPH</text>
        <dbReference type="Rhea" id="RHEA:22812"/>
        <dbReference type="ChEBI" id="CHEBI:15636"/>
        <dbReference type="ChEBI" id="CHEBI:57455"/>
        <dbReference type="ChEBI" id="CHEBI:57783"/>
        <dbReference type="ChEBI" id="CHEBI:58349"/>
        <dbReference type="EC" id="1.5.1.5"/>
    </reaction>
</comment>
<comment type="catalytic activity">
    <reaction evidence="1">
        <text>(6R)-5,10-methenyltetrahydrofolate + H2O = (6R)-10-formyltetrahydrofolate + H(+)</text>
        <dbReference type="Rhea" id="RHEA:23700"/>
        <dbReference type="ChEBI" id="CHEBI:15377"/>
        <dbReference type="ChEBI" id="CHEBI:15378"/>
        <dbReference type="ChEBI" id="CHEBI:57455"/>
        <dbReference type="ChEBI" id="CHEBI:195366"/>
        <dbReference type="EC" id="3.5.4.9"/>
    </reaction>
</comment>
<comment type="pathway">
    <text evidence="1">One-carbon metabolism; tetrahydrofolate interconversion.</text>
</comment>
<comment type="subunit">
    <text evidence="1">Homodimer.</text>
</comment>
<comment type="similarity">
    <text evidence="1">Belongs to the tetrahydrofolate dehydrogenase/cyclohydrolase family.</text>
</comment>
<feature type="chain" id="PRO_1000069226" description="Bifunctional protein FolD">
    <location>
        <begin position="1"/>
        <end position="285"/>
    </location>
</feature>
<feature type="binding site" evidence="1">
    <location>
        <begin position="165"/>
        <end position="167"/>
    </location>
    <ligand>
        <name>NADP(+)</name>
        <dbReference type="ChEBI" id="CHEBI:58349"/>
    </ligand>
</feature>
<feature type="binding site" evidence="1">
    <location>
        <position position="190"/>
    </location>
    <ligand>
        <name>NADP(+)</name>
        <dbReference type="ChEBI" id="CHEBI:58349"/>
    </ligand>
</feature>
<feature type="binding site" evidence="1">
    <location>
        <position position="231"/>
    </location>
    <ligand>
        <name>NADP(+)</name>
        <dbReference type="ChEBI" id="CHEBI:58349"/>
    </ligand>
</feature>
<gene>
    <name evidence="1" type="primary">folD</name>
    <name type="ordered locus">Clos_0249</name>
</gene>
<proteinExistence type="inferred from homology"/>
<dbReference type="EC" id="1.5.1.5" evidence="1"/>
<dbReference type="EC" id="3.5.4.9" evidence="1"/>
<dbReference type="EMBL" id="CP000853">
    <property type="protein sequence ID" value="ABW17812.1"/>
    <property type="molecule type" value="Genomic_DNA"/>
</dbReference>
<dbReference type="RefSeq" id="WP_012158127.1">
    <property type="nucleotide sequence ID" value="NC_009922.1"/>
</dbReference>
<dbReference type="SMR" id="A8MKZ5"/>
<dbReference type="STRING" id="350688.Clos_0249"/>
<dbReference type="KEGG" id="aoe:Clos_0249"/>
<dbReference type="eggNOG" id="COG0190">
    <property type="taxonomic scope" value="Bacteria"/>
</dbReference>
<dbReference type="HOGENOM" id="CLU_034045_2_1_9"/>
<dbReference type="OrthoDB" id="9803580at2"/>
<dbReference type="UniPathway" id="UPA00193"/>
<dbReference type="Proteomes" id="UP000000269">
    <property type="component" value="Chromosome"/>
</dbReference>
<dbReference type="GO" id="GO:0005829">
    <property type="term" value="C:cytosol"/>
    <property type="evidence" value="ECO:0007669"/>
    <property type="project" value="TreeGrafter"/>
</dbReference>
<dbReference type="GO" id="GO:0004477">
    <property type="term" value="F:methenyltetrahydrofolate cyclohydrolase activity"/>
    <property type="evidence" value="ECO:0007669"/>
    <property type="project" value="UniProtKB-UniRule"/>
</dbReference>
<dbReference type="GO" id="GO:0004488">
    <property type="term" value="F:methylenetetrahydrofolate dehydrogenase (NADP+) activity"/>
    <property type="evidence" value="ECO:0007669"/>
    <property type="project" value="UniProtKB-UniRule"/>
</dbReference>
<dbReference type="GO" id="GO:0000105">
    <property type="term" value="P:L-histidine biosynthetic process"/>
    <property type="evidence" value="ECO:0007669"/>
    <property type="project" value="UniProtKB-KW"/>
</dbReference>
<dbReference type="GO" id="GO:0009086">
    <property type="term" value="P:methionine biosynthetic process"/>
    <property type="evidence" value="ECO:0007669"/>
    <property type="project" value="UniProtKB-KW"/>
</dbReference>
<dbReference type="GO" id="GO:0006164">
    <property type="term" value="P:purine nucleotide biosynthetic process"/>
    <property type="evidence" value="ECO:0007669"/>
    <property type="project" value="UniProtKB-KW"/>
</dbReference>
<dbReference type="GO" id="GO:0035999">
    <property type="term" value="P:tetrahydrofolate interconversion"/>
    <property type="evidence" value="ECO:0007669"/>
    <property type="project" value="UniProtKB-UniRule"/>
</dbReference>
<dbReference type="CDD" id="cd01080">
    <property type="entry name" value="NAD_bind_m-THF_DH_Cyclohyd"/>
    <property type="match status" value="1"/>
</dbReference>
<dbReference type="FunFam" id="3.40.50.720:FF:000094">
    <property type="entry name" value="Bifunctional protein FolD"/>
    <property type="match status" value="1"/>
</dbReference>
<dbReference type="FunFam" id="3.40.50.10860:FF:000005">
    <property type="entry name" value="C-1-tetrahydrofolate synthase, cytoplasmic, putative"/>
    <property type="match status" value="1"/>
</dbReference>
<dbReference type="Gene3D" id="3.40.50.10860">
    <property type="entry name" value="Leucine Dehydrogenase, chain A, domain 1"/>
    <property type="match status" value="1"/>
</dbReference>
<dbReference type="Gene3D" id="3.40.50.720">
    <property type="entry name" value="NAD(P)-binding Rossmann-like Domain"/>
    <property type="match status" value="1"/>
</dbReference>
<dbReference type="HAMAP" id="MF_01576">
    <property type="entry name" value="THF_DHG_CYH"/>
    <property type="match status" value="1"/>
</dbReference>
<dbReference type="InterPro" id="IPR046346">
    <property type="entry name" value="Aminoacid_DH-like_N_sf"/>
</dbReference>
<dbReference type="InterPro" id="IPR036291">
    <property type="entry name" value="NAD(P)-bd_dom_sf"/>
</dbReference>
<dbReference type="InterPro" id="IPR000672">
    <property type="entry name" value="THF_DH/CycHdrlase"/>
</dbReference>
<dbReference type="InterPro" id="IPR020630">
    <property type="entry name" value="THF_DH/CycHdrlase_cat_dom"/>
</dbReference>
<dbReference type="InterPro" id="IPR020631">
    <property type="entry name" value="THF_DH/CycHdrlase_NAD-bd_dom"/>
</dbReference>
<dbReference type="PANTHER" id="PTHR48099:SF5">
    <property type="entry name" value="C-1-TETRAHYDROFOLATE SYNTHASE, CYTOPLASMIC"/>
    <property type="match status" value="1"/>
</dbReference>
<dbReference type="PANTHER" id="PTHR48099">
    <property type="entry name" value="C-1-TETRAHYDROFOLATE SYNTHASE, CYTOPLASMIC-RELATED"/>
    <property type="match status" value="1"/>
</dbReference>
<dbReference type="Pfam" id="PF00763">
    <property type="entry name" value="THF_DHG_CYH"/>
    <property type="match status" value="1"/>
</dbReference>
<dbReference type="Pfam" id="PF02882">
    <property type="entry name" value="THF_DHG_CYH_C"/>
    <property type="match status" value="1"/>
</dbReference>
<dbReference type="PRINTS" id="PR00085">
    <property type="entry name" value="THFDHDRGNASE"/>
</dbReference>
<dbReference type="SUPFAM" id="SSF53223">
    <property type="entry name" value="Aminoacid dehydrogenase-like, N-terminal domain"/>
    <property type="match status" value="1"/>
</dbReference>
<dbReference type="SUPFAM" id="SSF51735">
    <property type="entry name" value="NAD(P)-binding Rossmann-fold domains"/>
    <property type="match status" value="1"/>
</dbReference>
<name>FOLD_ALKOO</name>
<protein>
    <recommendedName>
        <fullName evidence="1">Bifunctional protein FolD</fullName>
    </recommendedName>
    <domain>
        <recommendedName>
            <fullName evidence="1">Methylenetetrahydrofolate dehydrogenase</fullName>
            <ecNumber evidence="1">1.5.1.5</ecNumber>
        </recommendedName>
    </domain>
    <domain>
        <recommendedName>
            <fullName evidence="1">Methenyltetrahydrofolate cyclohydrolase</fullName>
            <ecNumber evidence="1">3.5.4.9</ecNumber>
        </recommendedName>
    </domain>
</protein>
<organism>
    <name type="scientific">Alkaliphilus oremlandii (strain OhILAs)</name>
    <name type="common">Clostridium oremlandii (strain OhILAs)</name>
    <dbReference type="NCBI Taxonomy" id="350688"/>
    <lineage>
        <taxon>Bacteria</taxon>
        <taxon>Bacillati</taxon>
        <taxon>Bacillota</taxon>
        <taxon>Clostridia</taxon>
        <taxon>Peptostreptococcales</taxon>
        <taxon>Natronincolaceae</taxon>
        <taxon>Alkaliphilus</taxon>
    </lineage>
</organism>
<sequence>MSNVLKGKPVADKISEGLIQEVEVLKEKGITPKLAILRVGARGDDLAYEKGALSRCAKIGIDTEVKEFPEDITQEDFIEALRKTNGDPSIHGILIFRPLPKQLNEDVIKYEIAAEKDIDCLSPINAAKLLEGDDTGFPPCTPMAVIEILKHYEVQMEGKKAVVLGRSMVVGKPAALLLLKENATVTICHSRTKELSSVTKEGDILVAAIGKDRFVKEDFIKEGAVVIDVGINVDAEGNMYGDVDFEGCKEKAGMITPVPAGVGSVTTSILAKHVLKACRLQHNIY</sequence>
<reference key="1">
    <citation type="submission" date="2007-10" db="EMBL/GenBank/DDBJ databases">
        <title>Complete genome of Alkaliphilus oremlandii OhILAs.</title>
        <authorList>
            <person name="Copeland A."/>
            <person name="Lucas S."/>
            <person name="Lapidus A."/>
            <person name="Barry K."/>
            <person name="Detter J.C."/>
            <person name="Glavina del Rio T."/>
            <person name="Hammon N."/>
            <person name="Israni S."/>
            <person name="Dalin E."/>
            <person name="Tice H."/>
            <person name="Pitluck S."/>
            <person name="Chain P."/>
            <person name="Malfatti S."/>
            <person name="Shin M."/>
            <person name="Vergez L."/>
            <person name="Schmutz J."/>
            <person name="Larimer F."/>
            <person name="Land M."/>
            <person name="Hauser L."/>
            <person name="Kyrpides N."/>
            <person name="Mikhailova N."/>
            <person name="Stolz J.F."/>
            <person name="Dawson A."/>
            <person name="Fisher E."/>
            <person name="Crable B."/>
            <person name="Perera E."/>
            <person name="Lisak J."/>
            <person name="Ranganathan M."/>
            <person name="Basu P."/>
            <person name="Richardson P."/>
        </authorList>
    </citation>
    <scope>NUCLEOTIDE SEQUENCE [LARGE SCALE GENOMIC DNA]</scope>
    <source>
        <strain>OhILAs</strain>
    </source>
</reference>